<name>NUOB_PHEZH</name>
<gene>
    <name evidence="1" type="primary">nuoB</name>
    <name type="ordered locus">PHZ_c1804</name>
</gene>
<comment type="function">
    <text evidence="1">NDH-1 shuttles electrons from NADH, via FMN and iron-sulfur (Fe-S) centers, to quinones in the respiratory chain. The immediate electron acceptor for the enzyme in this species is believed to be ubiquinone. Couples the redox reaction to proton translocation (for every two electrons transferred, four hydrogen ions are translocated across the cytoplasmic membrane), and thus conserves the redox energy in a proton gradient.</text>
</comment>
<comment type="catalytic activity">
    <reaction evidence="1">
        <text>a quinone + NADH + 5 H(+)(in) = a quinol + NAD(+) + 4 H(+)(out)</text>
        <dbReference type="Rhea" id="RHEA:57888"/>
        <dbReference type="ChEBI" id="CHEBI:15378"/>
        <dbReference type="ChEBI" id="CHEBI:24646"/>
        <dbReference type="ChEBI" id="CHEBI:57540"/>
        <dbReference type="ChEBI" id="CHEBI:57945"/>
        <dbReference type="ChEBI" id="CHEBI:132124"/>
    </reaction>
</comment>
<comment type="cofactor">
    <cofactor evidence="1">
        <name>[4Fe-4S] cluster</name>
        <dbReference type="ChEBI" id="CHEBI:49883"/>
    </cofactor>
    <text evidence="1">Binds 1 [4Fe-4S] cluster.</text>
</comment>
<comment type="subunit">
    <text evidence="1">NDH-1 is composed of 14 different subunits. Subunits NuoB, C, D, E, F, and G constitute the peripheral sector of the complex.</text>
</comment>
<comment type="subcellular location">
    <subcellularLocation>
        <location evidence="1">Cell inner membrane</location>
        <topology evidence="1">Peripheral membrane protein</topology>
        <orientation evidence="1">Cytoplasmic side</orientation>
    </subcellularLocation>
</comment>
<comment type="similarity">
    <text evidence="1">Belongs to the complex I 20 kDa subunit family.</text>
</comment>
<reference key="1">
    <citation type="journal article" date="2008" name="BMC Genomics">
        <title>Complete genome of Phenylobacterium zucineum - a novel facultative intracellular bacterium isolated from human erythroleukemia cell line K562.</title>
        <authorList>
            <person name="Luo Y."/>
            <person name="Xu X."/>
            <person name="Ding Z."/>
            <person name="Liu Z."/>
            <person name="Zhang B."/>
            <person name="Yan Z."/>
            <person name="Sun J."/>
            <person name="Hu S."/>
            <person name="Hu X."/>
        </authorList>
    </citation>
    <scope>NUCLEOTIDE SEQUENCE [LARGE SCALE GENOMIC DNA]</scope>
    <source>
        <strain>HLK1</strain>
    </source>
</reference>
<organism>
    <name type="scientific">Phenylobacterium zucineum (strain HLK1)</name>
    <dbReference type="NCBI Taxonomy" id="450851"/>
    <lineage>
        <taxon>Bacteria</taxon>
        <taxon>Pseudomonadati</taxon>
        <taxon>Pseudomonadota</taxon>
        <taxon>Alphaproteobacteria</taxon>
        <taxon>Caulobacterales</taxon>
        <taxon>Caulobacteraceae</taxon>
        <taxon>Phenylobacterium</taxon>
    </lineage>
</organism>
<dbReference type="EC" id="7.1.1.-" evidence="1"/>
<dbReference type="EMBL" id="CP000747">
    <property type="protein sequence ID" value="ACG78215.1"/>
    <property type="molecule type" value="Genomic_DNA"/>
</dbReference>
<dbReference type="RefSeq" id="WP_012522357.1">
    <property type="nucleotide sequence ID" value="NC_011144.1"/>
</dbReference>
<dbReference type="SMR" id="B4RCM8"/>
<dbReference type="STRING" id="450851.PHZ_c1804"/>
<dbReference type="KEGG" id="pzu:PHZ_c1804"/>
<dbReference type="eggNOG" id="COG0377">
    <property type="taxonomic scope" value="Bacteria"/>
</dbReference>
<dbReference type="HOGENOM" id="CLU_055737_7_3_5"/>
<dbReference type="OrthoDB" id="9786737at2"/>
<dbReference type="Proteomes" id="UP000001868">
    <property type="component" value="Chromosome"/>
</dbReference>
<dbReference type="GO" id="GO:0005886">
    <property type="term" value="C:plasma membrane"/>
    <property type="evidence" value="ECO:0007669"/>
    <property type="project" value="UniProtKB-SubCell"/>
</dbReference>
<dbReference type="GO" id="GO:0045271">
    <property type="term" value="C:respiratory chain complex I"/>
    <property type="evidence" value="ECO:0007669"/>
    <property type="project" value="TreeGrafter"/>
</dbReference>
<dbReference type="GO" id="GO:0051539">
    <property type="term" value="F:4 iron, 4 sulfur cluster binding"/>
    <property type="evidence" value="ECO:0007669"/>
    <property type="project" value="UniProtKB-KW"/>
</dbReference>
<dbReference type="GO" id="GO:0005506">
    <property type="term" value="F:iron ion binding"/>
    <property type="evidence" value="ECO:0007669"/>
    <property type="project" value="UniProtKB-UniRule"/>
</dbReference>
<dbReference type="GO" id="GO:0008137">
    <property type="term" value="F:NADH dehydrogenase (ubiquinone) activity"/>
    <property type="evidence" value="ECO:0007669"/>
    <property type="project" value="InterPro"/>
</dbReference>
<dbReference type="GO" id="GO:0050136">
    <property type="term" value="F:NADH:ubiquinone reductase (non-electrogenic) activity"/>
    <property type="evidence" value="ECO:0007669"/>
    <property type="project" value="UniProtKB-UniRule"/>
</dbReference>
<dbReference type="GO" id="GO:0048038">
    <property type="term" value="F:quinone binding"/>
    <property type="evidence" value="ECO:0007669"/>
    <property type="project" value="UniProtKB-KW"/>
</dbReference>
<dbReference type="GO" id="GO:0009060">
    <property type="term" value="P:aerobic respiration"/>
    <property type="evidence" value="ECO:0007669"/>
    <property type="project" value="TreeGrafter"/>
</dbReference>
<dbReference type="GO" id="GO:0015990">
    <property type="term" value="P:electron transport coupled proton transport"/>
    <property type="evidence" value="ECO:0007669"/>
    <property type="project" value="TreeGrafter"/>
</dbReference>
<dbReference type="FunFam" id="3.40.50.12280:FF:000001">
    <property type="entry name" value="NADH-quinone oxidoreductase subunit B 2"/>
    <property type="match status" value="1"/>
</dbReference>
<dbReference type="Gene3D" id="3.40.50.12280">
    <property type="match status" value="1"/>
</dbReference>
<dbReference type="HAMAP" id="MF_01356">
    <property type="entry name" value="NDH1_NuoB"/>
    <property type="match status" value="1"/>
</dbReference>
<dbReference type="InterPro" id="IPR006137">
    <property type="entry name" value="NADH_UbQ_OxRdtase-like_20kDa"/>
</dbReference>
<dbReference type="InterPro" id="IPR006138">
    <property type="entry name" value="NADH_UQ_OxRdtase_20Kd_su"/>
</dbReference>
<dbReference type="NCBIfam" id="TIGR01957">
    <property type="entry name" value="nuoB_fam"/>
    <property type="match status" value="1"/>
</dbReference>
<dbReference type="NCBIfam" id="NF005012">
    <property type="entry name" value="PRK06411.1"/>
    <property type="match status" value="1"/>
</dbReference>
<dbReference type="PANTHER" id="PTHR11995">
    <property type="entry name" value="NADH DEHYDROGENASE"/>
    <property type="match status" value="1"/>
</dbReference>
<dbReference type="PANTHER" id="PTHR11995:SF14">
    <property type="entry name" value="NADH DEHYDROGENASE [UBIQUINONE] IRON-SULFUR PROTEIN 7, MITOCHONDRIAL"/>
    <property type="match status" value="1"/>
</dbReference>
<dbReference type="Pfam" id="PF01058">
    <property type="entry name" value="Oxidored_q6"/>
    <property type="match status" value="1"/>
</dbReference>
<dbReference type="SUPFAM" id="SSF56770">
    <property type="entry name" value="HydA/Nqo6-like"/>
    <property type="match status" value="1"/>
</dbReference>
<dbReference type="PROSITE" id="PS01150">
    <property type="entry name" value="COMPLEX1_20K"/>
    <property type="match status" value="1"/>
</dbReference>
<keyword id="KW-0004">4Fe-4S</keyword>
<keyword id="KW-0997">Cell inner membrane</keyword>
<keyword id="KW-1003">Cell membrane</keyword>
<keyword id="KW-0408">Iron</keyword>
<keyword id="KW-0411">Iron-sulfur</keyword>
<keyword id="KW-0472">Membrane</keyword>
<keyword id="KW-0479">Metal-binding</keyword>
<keyword id="KW-0520">NAD</keyword>
<keyword id="KW-0874">Quinone</keyword>
<keyword id="KW-1185">Reference proteome</keyword>
<keyword id="KW-1278">Translocase</keyword>
<keyword id="KW-0813">Transport</keyword>
<keyword id="KW-0830">Ubiquinone</keyword>
<accession>B4RCM8</accession>
<sequence length="193" mass="21270">MEERRPGMGVIVPAGEAGRTTVEGYDPKLHDPYFDGVSQRLADKGFVTAAADDLITWARTGSLMWMTFGLACCAVEMMQASMPRYDLERYGFAPRASPRQSDVMIVAGTLVNKMAPALRKVYDQMPEPRYVISMGSCANGGGYYYFSYSTVRGCDRVVPVDVYVPGCPPTAEALVYGVLQLQKKIRRTGTIVR</sequence>
<protein>
    <recommendedName>
        <fullName evidence="1">NADH-quinone oxidoreductase subunit B</fullName>
        <ecNumber evidence="1">7.1.1.-</ecNumber>
    </recommendedName>
    <alternativeName>
        <fullName evidence="1">NADH dehydrogenase I subunit B</fullName>
    </alternativeName>
    <alternativeName>
        <fullName evidence="1">NDH-1 subunit B</fullName>
    </alternativeName>
</protein>
<proteinExistence type="inferred from homology"/>
<feature type="chain" id="PRO_0000376301" description="NADH-quinone oxidoreductase subunit B">
    <location>
        <begin position="1"/>
        <end position="193"/>
    </location>
</feature>
<feature type="binding site" evidence="1">
    <location>
        <position position="72"/>
    </location>
    <ligand>
        <name>[4Fe-4S] cluster</name>
        <dbReference type="ChEBI" id="CHEBI:49883"/>
    </ligand>
</feature>
<feature type="binding site" evidence="1">
    <location>
        <position position="73"/>
    </location>
    <ligand>
        <name>[4Fe-4S] cluster</name>
        <dbReference type="ChEBI" id="CHEBI:49883"/>
    </ligand>
</feature>
<feature type="binding site" evidence="1">
    <location>
        <position position="137"/>
    </location>
    <ligand>
        <name>[4Fe-4S] cluster</name>
        <dbReference type="ChEBI" id="CHEBI:49883"/>
    </ligand>
</feature>
<feature type="binding site" evidence="1">
    <location>
        <position position="167"/>
    </location>
    <ligand>
        <name>[4Fe-4S] cluster</name>
        <dbReference type="ChEBI" id="CHEBI:49883"/>
    </ligand>
</feature>
<evidence type="ECO:0000255" key="1">
    <source>
        <dbReference type="HAMAP-Rule" id="MF_01356"/>
    </source>
</evidence>